<accession>Q17QV3</accession>
<proteinExistence type="inferred from homology"/>
<keyword id="KW-0963">Cytoplasm</keyword>
<keyword id="KW-1017">Isopeptide bond</keyword>
<keyword id="KW-0539">Nucleus</keyword>
<keyword id="KW-1185">Reference proteome</keyword>
<keyword id="KW-0832">Ubl conjugation</keyword>
<keyword id="KW-0833">Ubl conjugation pathway</keyword>
<protein>
    <recommendedName>
        <fullName>Small ubiquitin-related modifier 3</fullName>
        <shortName>SUMO-3</shortName>
    </recommendedName>
</protein>
<dbReference type="EMBL" id="BC118163">
    <property type="protein sequence ID" value="AAI18164.1"/>
    <property type="molecule type" value="mRNA"/>
</dbReference>
<dbReference type="RefSeq" id="NP_001069917.1">
    <property type="nucleotide sequence ID" value="NM_001076449.1"/>
</dbReference>
<dbReference type="BMRB" id="Q17QV3"/>
<dbReference type="SMR" id="Q17QV3"/>
<dbReference type="FunCoup" id="Q17QV3">
    <property type="interactions" value="3968"/>
</dbReference>
<dbReference type="STRING" id="9913.ENSBTAP00000023029"/>
<dbReference type="PaxDb" id="9913-ENSBTAP00000023029"/>
<dbReference type="Ensembl" id="ENSBTAT00000023029.4">
    <property type="protein sequence ID" value="ENSBTAP00000023029.3"/>
    <property type="gene ID" value="ENSBTAG00000017321.5"/>
</dbReference>
<dbReference type="GeneID" id="617236"/>
<dbReference type="KEGG" id="bta:617236"/>
<dbReference type="CTD" id="6612"/>
<dbReference type="VEuPathDB" id="HostDB:ENSBTAG00000017321"/>
<dbReference type="VGNC" id="VGNC:56237">
    <property type="gene designation" value="SUMO3"/>
</dbReference>
<dbReference type="eggNOG" id="KOG1769">
    <property type="taxonomic scope" value="Eukaryota"/>
</dbReference>
<dbReference type="GeneTree" id="ENSGT00950000182895"/>
<dbReference type="HOGENOM" id="CLU_148322_2_1_1"/>
<dbReference type="InParanoid" id="Q17QV3"/>
<dbReference type="OMA" id="SKMMNAY"/>
<dbReference type="OrthoDB" id="442921at2759"/>
<dbReference type="TreeFam" id="TF315116"/>
<dbReference type="Reactome" id="R-BTA-3065679">
    <property type="pathway name" value="SUMO is proteolytically processed"/>
</dbReference>
<dbReference type="Reactome" id="R-BTA-3108214">
    <property type="pathway name" value="SUMOylation of DNA damage response and repair proteins"/>
</dbReference>
<dbReference type="Reactome" id="R-BTA-3232118">
    <property type="pathway name" value="SUMOylation of transcription factors"/>
</dbReference>
<dbReference type="Reactome" id="R-BTA-3899300">
    <property type="pathway name" value="SUMOylation of transcription cofactors"/>
</dbReference>
<dbReference type="Reactome" id="R-BTA-4090294">
    <property type="pathway name" value="SUMOylation of intracellular receptors"/>
</dbReference>
<dbReference type="Reactome" id="R-BTA-4551638">
    <property type="pathway name" value="SUMOylation of chromatin organization proteins"/>
</dbReference>
<dbReference type="Reactome" id="R-BTA-4615885">
    <property type="pathway name" value="SUMOylation of DNA replication proteins"/>
</dbReference>
<dbReference type="Reactome" id="R-BTA-4755510">
    <property type="pathway name" value="SUMOylation of immune response proteins"/>
</dbReference>
<dbReference type="Reactome" id="R-BTA-5696395">
    <property type="pathway name" value="Formation of Incision Complex in GG-NER"/>
</dbReference>
<dbReference type="Proteomes" id="UP000009136">
    <property type="component" value="Chromosome 1"/>
</dbReference>
<dbReference type="Bgee" id="ENSBTAG00000017321">
    <property type="expression patterns" value="Expressed in retina and 104 other cell types or tissues"/>
</dbReference>
<dbReference type="GO" id="GO:0005737">
    <property type="term" value="C:cytoplasm"/>
    <property type="evidence" value="ECO:0007669"/>
    <property type="project" value="UniProtKB-SubCell"/>
</dbReference>
<dbReference type="GO" id="GO:0005634">
    <property type="term" value="C:nucleus"/>
    <property type="evidence" value="ECO:0000318"/>
    <property type="project" value="GO_Central"/>
</dbReference>
<dbReference type="GO" id="GO:0016605">
    <property type="term" value="C:PML body"/>
    <property type="evidence" value="ECO:0000250"/>
    <property type="project" value="UniProtKB"/>
</dbReference>
<dbReference type="GO" id="GO:0031386">
    <property type="term" value="F:protein tag activity"/>
    <property type="evidence" value="ECO:0000318"/>
    <property type="project" value="GO_Central"/>
</dbReference>
<dbReference type="GO" id="GO:0044389">
    <property type="term" value="F:ubiquitin-like protein ligase binding"/>
    <property type="evidence" value="ECO:0000318"/>
    <property type="project" value="GO_Central"/>
</dbReference>
<dbReference type="GO" id="GO:0016925">
    <property type="term" value="P:protein sumoylation"/>
    <property type="evidence" value="ECO:0000250"/>
    <property type="project" value="UniProtKB"/>
</dbReference>
<dbReference type="CDD" id="cd16115">
    <property type="entry name" value="Ubl_SUMO2_3_4"/>
    <property type="match status" value="1"/>
</dbReference>
<dbReference type="FunFam" id="3.10.20.90:FF:000022">
    <property type="entry name" value="Small ubiquitin-related modifier"/>
    <property type="match status" value="1"/>
</dbReference>
<dbReference type="Gene3D" id="3.10.20.90">
    <property type="entry name" value="Phosphatidylinositol 3-kinase Catalytic Subunit, Chain A, domain 1"/>
    <property type="match status" value="1"/>
</dbReference>
<dbReference type="InterPro" id="IPR022617">
    <property type="entry name" value="Rad60/SUMO-like_dom"/>
</dbReference>
<dbReference type="InterPro" id="IPR000626">
    <property type="entry name" value="Ubiquitin-like_dom"/>
</dbReference>
<dbReference type="InterPro" id="IPR029071">
    <property type="entry name" value="Ubiquitin-like_domsf"/>
</dbReference>
<dbReference type="PANTHER" id="PTHR10562">
    <property type="entry name" value="SMALL UBIQUITIN-RELATED MODIFIER"/>
    <property type="match status" value="1"/>
</dbReference>
<dbReference type="Pfam" id="PF11976">
    <property type="entry name" value="Rad60-SLD"/>
    <property type="match status" value="1"/>
</dbReference>
<dbReference type="SMART" id="SM00213">
    <property type="entry name" value="UBQ"/>
    <property type="match status" value="1"/>
</dbReference>
<dbReference type="SUPFAM" id="SSF54236">
    <property type="entry name" value="Ubiquitin-like"/>
    <property type="match status" value="1"/>
</dbReference>
<dbReference type="PROSITE" id="PS50053">
    <property type="entry name" value="UBIQUITIN_2"/>
    <property type="match status" value="1"/>
</dbReference>
<evidence type="ECO:0000250" key="1"/>
<evidence type="ECO:0000250" key="2">
    <source>
        <dbReference type="UniProtKB" id="P55854"/>
    </source>
</evidence>
<evidence type="ECO:0000255" key="3">
    <source>
        <dbReference type="PROSITE-ProRule" id="PRU00214"/>
    </source>
</evidence>
<evidence type="ECO:0000305" key="4"/>
<comment type="function">
    <text evidence="2">Ubiquitin-like protein which can be covalently attached to target lysines either as a monomer or as a lysine-linked polymer. Does not seem to be involved in protein degradation and may function as an antagonist of ubiquitin in the degradation process. Plays a role in a number of cellular processes such as nuclear transport, DNA replication and repair, mitosis and signal transduction. Covalent attachment to its substrates requires prior activation by the E1 complex SAE1-SAE2 and linkage to the E2 enzyme UBE2I, and can be promoted by an E3 ligase such as PIAS1-4, RANBP2 or CBX4. Plays a role in the regulation of sumoylation status of SETX (By similarity).</text>
</comment>
<comment type="subunit">
    <text evidence="1">Interacts with SAE2 and UBE2I. Covalently attached to a number of proteins. Interacts with USP25 (via ts SIM domain); the interaction sumoylates USP25 and inhibits its ubiquitin hydrolyzing activity. Interacts with BMAL1 (By similarity).</text>
</comment>
<comment type="subcellular location">
    <subcellularLocation>
        <location evidence="1">Cytoplasm</location>
    </subcellularLocation>
    <subcellularLocation>
        <location evidence="1">Nucleus</location>
    </subcellularLocation>
    <subcellularLocation>
        <location evidence="1">Nucleus</location>
        <location evidence="1">PML body</location>
    </subcellularLocation>
</comment>
<comment type="PTM">
    <text evidence="1">Polymeric chains can be formed through Lys-11 cross-linking.</text>
</comment>
<comment type="PTM">
    <text evidence="1">Cleavage of precursor form by SENP1, SENP2 or SENP5 is necessary for function.</text>
</comment>
<comment type="similarity">
    <text evidence="4">Belongs to the ubiquitin family. SUMO subfamily.</text>
</comment>
<sequence>MSEEKPKEGVKTENDHINLKVAGQDGSVVQFKIKRHTPLSKLMKAYCERQGLSMRQIRFRFDGQPINETDTPAQLEMEDEDTIDVFQQQTGGSRVASCLLGSGL</sequence>
<feature type="chain" id="PRO_0000267624" description="Small ubiquitin-related modifier 3">
    <location>
        <begin position="1"/>
        <end position="92"/>
    </location>
</feature>
<feature type="propeptide" id="PRO_0000267625" evidence="1">
    <location>
        <begin position="93"/>
        <end position="104"/>
    </location>
</feature>
<feature type="domain" description="Ubiquitin-like" evidence="3">
    <location>
        <begin position="15"/>
        <end position="92"/>
    </location>
</feature>
<feature type="cross-link" description="Glycyl lysine isopeptide (Lys-Gly) (interchain with G-Cter in SUMO2)" evidence="2">
    <location>
        <position position="5"/>
    </location>
</feature>
<feature type="cross-link" description="Glycyl lysine isopeptide (Lys-Gly) (interchain with G-Cter in SUMO2)" evidence="2">
    <location>
        <position position="7"/>
    </location>
</feature>
<feature type="cross-link" description="Glycyl lysine isopeptide (Lys-Gly) (interchain with G-Cter in SUMO); alternate" evidence="1">
    <location>
        <position position="11"/>
    </location>
</feature>
<feature type="cross-link" description="Glycyl lysine isopeptide (Lys-Gly) (interchain with G-Cter in SUMO2); alternate" evidence="2">
    <location>
        <position position="11"/>
    </location>
</feature>
<feature type="cross-link" description="Glycyl lysine isopeptide (Gly-Lys) (interchain with K-? in acceptor proteins)" evidence="3">
    <location>
        <position position="92"/>
    </location>
</feature>
<organism>
    <name type="scientific">Bos taurus</name>
    <name type="common">Bovine</name>
    <dbReference type="NCBI Taxonomy" id="9913"/>
    <lineage>
        <taxon>Eukaryota</taxon>
        <taxon>Metazoa</taxon>
        <taxon>Chordata</taxon>
        <taxon>Craniata</taxon>
        <taxon>Vertebrata</taxon>
        <taxon>Euteleostomi</taxon>
        <taxon>Mammalia</taxon>
        <taxon>Eutheria</taxon>
        <taxon>Laurasiatheria</taxon>
        <taxon>Artiodactyla</taxon>
        <taxon>Ruminantia</taxon>
        <taxon>Pecora</taxon>
        <taxon>Bovidae</taxon>
        <taxon>Bovinae</taxon>
        <taxon>Bos</taxon>
    </lineage>
</organism>
<gene>
    <name type="primary">SUMO3</name>
</gene>
<name>SUMO3_BOVIN</name>
<reference key="1">
    <citation type="submission" date="2006-06" db="EMBL/GenBank/DDBJ databases">
        <authorList>
            <consortium name="NIH - Mammalian Gene Collection (MGC) project"/>
        </authorList>
    </citation>
    <scope>NUCLEOTIDE SEQUENCE [LARGE SCALE MRNA]</scope>
    <source>
        <strain>Hereford</strain>
        <tissue>Thalamus</tissue>
    </source>
</reference>